<name>PYRB_ECO55</name>
<gene>
    <name evidence="1" type="primary">pyrB</name>
    <name type="ordered locus">EC55989_4805</name>
</gene>
<organism>
    <name type="scientific">Escherichia coli (strain 55989 / EAEC)</name>
    <dbReference type="NCBI Taxonomy" id="585055"/>
    <lineage>
        <taxon>Bacteria</taxon>
        <taxon>Pseudomonadati</taxon>
        <taxon>Pseudomonadota</taxon>
        <taxon>Gammaproteobacteria</taxon>
        <taxon>Enterobacterales</taxon>
        <taxon>Enterobacteriaceae</taxon>
        <taxon>Escherichia</taxon>
    </lineage>
</organism>
<keyword id="KW-0665">Pyrimidine biosynthesis</keyword>
<keyword id="KW-1185">Reference proteome</keyword>
<keyword id="KW-0808">Transferase</keyword>
<sequence>MANPLYQKHIISINDLSRDDLNLVLATAAKLKANPQPELLKHKVIASCFFEASTRTRLSFETSMHRLGASVVGFSDSANTSLGKKGETLADTISVISTYVDAIVMRHPQEGAARLATEFSGNVPVLNAGDGSNQHPTQTLLDLFTIQETQGRLDNLHVAMVGDLKYGRTVHSLTQALAKFDGNRFYFIAPDALAMPQYILDMLDEKGIAWSLHSSIEEVIAEVDILYMTRVQKERLDPSEYANVKAQFVLRASDLHNAKANMKVLHPLPRVDEIATDVDKTPHAWYFQQAGNGIFARQALLALVLNRDLVL</sequence>
<feature type="chain" id="PRO_1000116141" description="Aspartate carbamoyltransferase catalytic subunit">
    <location>
        <begin position="1"/>
        <end position="311"/>
    </location>
</feature>
<feature type="binding site" evidence="1">
    <location>
        <position position="55"/>
    </location>
    <ligand>
        <name>carbamoyl phosphate</name>
        <dbReference type="ChEBI" id="CHEBI:58228"/>
    </ligand>
</feature>
<feature type="binding site" evidence="1">
    <location>
        <position position="56"/>
    </location>
    <ligand>
        <name>carbamoyl phosphate</name>
        <dbReference type="ChEBI" id="CHEBI:58228"/>
    </ligand>
</feature>
<feature type="binding site" evidence="1">
    <location>
        <position position="85"/>
    </location>
    <ligand>
        <name>L-aspartate</name>
        <dbReference type="ChEBI" id="CHEBI:29991"/>
    </ligand>
</feature>
<feature type="binding site" evidence="1">
    <location>
        <position position="106"/>
    </location>
    <ligand>
        <name>carbamoyl phosphate</name>
        <dbReference type="ChEBI" id="CHEBI:58228"/>
    </ligand>
</feature>
<feature type="binding site" evidence="1">
    <location>
        <position position="135"/>
    </location>
    <ligand>
        <name>carbamoyl phosphate</name>
        <dbReference type="ChEBI" id="CHEBI:58228"/>
    </ligand>
</feature>
<feature type="binding site" evidence="1">
    <location>
        <position position="138"/>
    </location>
    <ligand>
        <name>carbamoyl phosphate</name>
        <dbReference type="ChEBI" id="CHEBI:58228"/>
    </ligand>
</feature>
<feature type="binding site" evidence="1">
    <location>
        <position position="168"/>
    </location>
    <ligand>
        <name>L-aspartate</name>
        <dbReference type="ChEBI" id="CHEBI:29991"/>
    </ligand>
</feature>
<feature type="binding site" evidence="1">
    <location>
        <position position="230"/>
    </location>
    <ligand>
        <name>L-aspartate</name>
        <dbReference type="ChEBI" id="CHEBI:29991"/>
    </ligand>
</feature>
<feature type="binding site" evidence="1">
    <location>
        <position position="268"/>
    </location>
    <ligand>
        <name>carbamoyl phosphate</name>
        <dbReference type="ChEBI" id="CHEBI:58228"/>
    </ligand>
</feature>
<feature type="binding site" evidence="1">
    <location>
        <position position="269"/>
    </location>
    <ligand>
        <name>carbamoyl phosphate</name>
        <dbReference type="ChEBI" id="CHEBI:58228"/>
    </ligand>
</feature>
<accession>B7LCV3</accession>
<reference key="1">
    <citation type="journal article" date="2009" name="PLoS Genet.">
        <title>Organised genome dynamics in the Escherichia coli species results in highly diverse adaptive paths.</title>
        <authorList>
            <person name="Touchon M."/>
            <person name="Hoede C."/>
            <person name="Tenaillon O."/>
            <person name="Barbe V."/>
            <person name="Baeriswyl S."/>
            <person name="Bidet P."/>
            <person name="Bingen E."/>
            <person name="Bonacorsi S."/>
            <person name="Bouchier C."/>
            <person name="Bouvet O."/>
            <person name="Calteau A."/>
            <person name="Chiapello H."/>
            <person name="Clermont O."/>
            <person name="Cruveiller S."/>
            <person name="Danchin A."/>
            <person name="Diard M."/>
            <person name="Dossat C."/>
            <person name="Karoui M.E."/>
            <person name="Frapy E."/>
            <person name="Garry L."/>
            <person name="Ghigo J.M."/>
            <person name="Gilles A.M."/>
            <person name="Johnson J."/>
            <person name="Le Bouguenec C."/>
            <person name="Lescat M."/>
            <person name="Mangenot S."/>
            <person name="Martinez-Jehanne V."/>
            <person name="Matic I."/>
            <person name="Nassif X."/>
            <person name="Oztas S."/>
            <person name="Petit M.A."/>
            <person name="Pichon C."/>
            <person name="Rouy Z."/>
            <person name="Ruf C.S."/>
            <person name="Schneider D."/>
            <person name="Tourret J."/>
            <person name="Vacherie B."/>
            <person name="Vallenet D."/>
            <person name="Medigue C."/>
            <person name="Rocha E.P.C."/>
            <person name="Denamur E."/>
        </authorList>
    </citation>
    <scope>NUCLEOTIDE SEQUENCE [LARGE SCALE GENOMIC DNA]</scope>
    <source>
        <strain>55989 / EAEC</strain>
    </source>
</reference>
<proteinExistence type="inferred from homology"/>
<dbReference type="EC" id="2.1.3.2" evidence="1"/>
<dbReference type="EMBL" id="CU928145">
    <property type="protein sequence ID" value="CAV01778.1"/>
    <property type="molecule type" value="Genomic_DNA"/>
</dbReference>
<dbReference type="RefSeq" id="WP_000013042.1">
    <property type="nucleotide sequence ID" value="NC_011748.1"/>
</dbReference>
<dbReference type="SMR" id="B7LCV3"/>
<dbReference type="KEGG" id="eck:EC55989_4805"/>
<dbReference type="HOGENOM" id="CLU_043846_1_2_6"/>
<dbReference type="UniPathway" id="UPA00070">
    <property type="reaction ID" value="UER00116"/>
</dbReference>
<dbReference type="Proteomes" id="UP000000746">
    <property type="component" value="Chromosome"/>
</dbReference>
<dbReference type="GO" id="GO:0005829">
    <property type="term" value="C:cytosol"/>
    <property type="evidence" value="ECO:0007669"/>
    <property type="project" value="TreeGrafter"/>
</dbReference>
<dbReference type="GO" id="GO:0016597">
    <property type="term" value="F:amino acid binding"/>
    <property type="evidence" value="ECO:0007669"/>
    <property type="project" value="InterPro"/>
</dbReference>
<dbReference type="GO" id="GO:0004070">
    <property type="term" value="F:aspartate carbamoyltransferase activity"/>
    <property type="evidence" value="ECO:0007669"/>
    <property type="project" value="UniProtKB-UniRule"/>
</dbReference>
<dbReference type="GO" id="GO:0006207">
    <property type="term" value="P:'de novo' pyrimidine nucleobase biosynthetic process"/>
    <property type="evidence" value="ECO:0007669"/>
    <property type="project" value="InterPro"/>
</dbReference>
<dbReference type="GO" id="GO:0044205">
    <property type="term" value="P:'de novo' UMP biosynthetic process"/>
    <property type="evidence" value="ECO:0007669"/>
    <property type="project" value="UniProtKB-UniRule"/>
</dbReference>
<dbReference type="GO" id="GO:0006520">
    <property type="term" value="P:amino acid metabolic process"/>
    <property type="evidence" value="ECO:0007669"/>
    <property type="project" value="InterPro"/>
</dbReference>
<dbReference type="FunFam" id="3.40.50.1370:FF:000001">
    <property type="entry name" value="Aspartate carbamoyltransferase"/>
    <property type="match status" value="1"/>
</dbReference>
<dbReference type="FunFam" id="3.40.50.1370:FF:000002">
    <property type="entry name" value="Aspartate carbamoyltransferase 2"/>
    <property type="match status" value="1"/>
</dbReference>
<dbReference type="Gene3D" id="3.40.50.1370">
    <property type="entry name" value="Aspartate/ornithine carbamoyltransferase"/>
    <property type="match status" value="2"/>
</dbReference>
<dbReference type="HAMAP" id="MF_00001">
    <property type="entry name" value="Asp_carb_tr"/>
    <property type="match status" value="1"/>
</dbReference>
<dbReference type="InterPro" id="IPR006132">
    <property type="entry name" value="Asp/Orn_carbamoyltranf_P-bd"/>
</dbReference>
<dbReference type="InterPro" id="IPR006130">
    <property type="entry name" value="Asp/Orn_carbamoylTrfase"/>
</dbReference>
<dbReference type="InterPro" id="IPR036901">
    <property type="entry name" value="Asp/Orn_carbamoylTrfase_sf"/>
</dbReference>
<dbReference type="InterPro" id="IPR002082">
    <property type="entry name" value="Asp_carbamoyltransf"/>
</dbReference>
<dbReference type="InterPro" id="IPR006131">
    <property type="entry name" value="Asp_carbamoyltransf_Asp/Orn-bd"/>
</dbReference>
<dbReference type="NCBIfam" id="TIGR00670">
    <property type="entry name" value="asp_carb_tr"/>
    <property type="match status" value="1"/>
</dbReference>
<dbReference type="NCBIfam" id="NF002032">
    <property type="entry name" value="PRK00856.1"/>
    <property type="match status" value="1"/>
</dbReference>
<dbReference type="PANTHER" id="PTHR45753:SF6">
    <property type="entry name" value="ASPARTATE CARBAMOYLTRANSFERASE"/>
    <property type="match status" value="1"/>
</dbReference>
<dbReference type="PANTHER" id="PTHR45753">
    <property type="entry name" value="ORNITHINE CARBAMOYLTRANSFERASE, MITOCHONDRIAL"/>
    <property type="match status" value="1"/>
</dbReference>
<dbReference type="Pfam" id="PF00185">
    <property type="entry name" value="OTCace"/>
    <property type="match status" value="1"/>
</dbReference>
<dbReference type="Pfam" id="PF02729">
    <property type="entry name" value="OTCace_N"/>
    <property type="match status" value="1"/>
</dbReference>
<dbReference type="PRINTS" id="PR00100">
    <property type="entry name" value="AOTCASE"/>
</dbReference>
<dbReference type="PRINTS" id="PR00101">
    <property type="entry name" value="ATCASE"/>
</dbReference>
<dbReference type="SUPFAM" id="SSF53671">
    <property type="entry name" value="Aspartate/ornithine carbamoyltransferase"/>
    <property type="match status" value="1"/>
</dbReference>
<dbReference type="PROSITE" id="PS00097">
    <property type="entry name" value="CARBAMOYLTRANSFERASE"/>
    <property type="match status" value="1"/>
</dbReference>
<comment type="function">
    <text evidence="1">Catalyzes the condensation of carbamoyl phosphate and aspartate to form carbamoyl aspartate and inorganic phosphate, the committed step in the de novo pyrimidine nucleotide biosynthesis pathway.</text>
</comment>
<comment type="catalytic activity">
    <reaction evidence="1">
        <text>carbamoyl phosphate + L-aspartate = N-carbamoyl-L-aspartate + phosphate + H(+)</text>
        <dbReference type="Rhea" id="RHEA:20013"/>
        <dbReference type="ChEBI" id="CHEBI:15378"/>
        <dbReference type="ChEBI" id="CHEBI:29991"/>
        <dbReference type="ChEBI" id="CHEBI:32814"/>
        <dbReference type="ChEBI" id="CHEBI:43474"/>
        <dbReference type="ChEBI" id="CHEBI:58228"/>
        <dbReference type="EC" id="2.1.3.2"/>
    </reaction>
</comment>
<comment type="pathway">
    <text evidence="1">Pyrimidine metabolism; UMP biosynthesis via de novo pathway; (S)-dihydroorotate from bicarbonate: step 2/3.</text>
</comment>
<comment type="subunit">
    <text evidence="1">Heterododecamer (2C3:3R2) of six catalytic PyrB chains organized as two trimers (C3), and six regulatory PyrI chains organized as three dimers (R2).</text>
</comment>
<comment type="similarity">
    <text evidence="1">Belongs to the aspartate/ornithine carbamoyltransferase superfamily. ATCase family.</text>
</comment>
<evidence type="ECO:0000255" key="1">
    <source>
        <dbReference type="HAMAP-Rule" id="MF_00001"/>
    </source>
</evidence>
<protein>
    <recommendedName>
        <fullName evidence="1">Aspartate carbamoyltransferase catalytic subunit</fullName>
        <ecNumber evidence="1">2.1.3.2</ecNumber>
    </recommendedName>
    <alternativeName>
        <fullName evidence="1">Aspartate transcarbamylase</fullName>
        <shortName evidence="1">ATCase</shortName>
    </alternativeName>
</protein>